<keyword id="KW-1185">Reference proteome</keyword>
<keyword id="KW-0687">Ribonucleoprotein</keyword>
<keyword id="KW-0689">Ribosomal protein</keyword>
<accession>Q38V50</accession>
<dbReference type="EMBL" id="CR936503">
    <property type="protein sequence ID" value="CAI55934.1"/>
    <property type="molecule type" value="Genomic_DNA"/>
</dbReference>
<dbReference type="RefSeq" id="WP_004270647.1">
    <property type="nucleotide sequence ID" value="NC_007576.1"/>
</dbReference>
<dbReference type="SMR" id="Q38V50"/>
<dbReference type="STRING" id="314315.LCA_1627"/>
<dbReference type="KEGG" id="lsa:LCA_1627"/>
<dbReference type="eggNOG" id="COG0254">
    <property type="taxonomic scope" value="Bacteria"/>
</dbReference>
<dbReference type="HOGENOM" id="CLU_114306_2_2_9"/>
<dbReference type="OrthoDB" id="9803251at2"/>
<dbReference type="Proteomes" id="UP000002707">
    <property type="component" value="Chromosome"/>
</dbReference>
<dbReference type="GO" id="GO:1990904">
    <property type="term" value="C:ribonucleoprotein complex"/>
    <property type="evidence" value="ECO:0007669"/>
    <property type="project" value="UniProtKB-KW"/>
</dbReference>
<dbReference type="GO" id="GO:0005840">
    <property type="term" value="C:ribosome"/>
    <property type="evidence" value="ECO:0007669"/>
    <property type="project" value="UniProtKB-KW"/>
</dbReference>
<dbReference type="GO" id="GO:0003735">
    <property type="term" value="F:structural constituent of ribosome"/>
    <property type="evidence" value="ECO:0007669"/>
    <property type="project" value="InterPro"/>
</dbReference>
<dbReference type="GO" id="GO:0006412">
    <property type="term" value="P:translation"/>
    <property type="evidence" value="ECO:0007669"/>
    <property type="project" value="UniProtKB-UniRule"/>
</dbReference>
<dbReference type="Gene3D" id="4.10.830.30">
    <property type="entry name" value="Ribosomal protein L31"/>
    <property type="match status" value="1"/>
</dbReference>
<dbReference type="HAMAP" id="MF_00502">
    <property type="entry name" value="Ribosomal_bL31_2"/>
    <property type="match status" value="1"/>
</dbReference>
<dbReference type="InterPro" id="IPR034704">
    <property type="entry name" value="Ribosomal_bL28/bL31-like_sf"/>
</dbReference>
<dbReference type="InterPro" id="IPR002150">
    <property type="entry name" value="Ribosomal_bL31"/>
</dbReference>
<dbReference type="InterPro" id="IPR027493">
    <property type="entry name" value="Ribosomal_bL31_B"/>
</dbReference>
<dbReference type="InterPro" id="IPR042105">
    <property type="entry name" value="Ribosomal_bL31_sf"/>
</dbReference>
<dbReference type="NCBIfam" id="TIGR00105">
    <property type="entry name" value="L31"/>
    <property type="match status" value="1"/>
</dbReference>
<dbReference type="NCBIfam" id="NF002462">
    <property type="entry name" value="PRK01678.1"/>
    <property type="match status" value="1"/>
</dbReference>
<dbReference type="PANTHER" id="PTHR33280">
    <property type="entry name" value="50S RIBOSOMAL PROTEIN L31, CHLOROPLASTIC"/>
    <property type="match status" value="1"/>
</dbReference>
<dbReference type="PANTHER" id="PTHR33280:SF1">
    <property type="entry name" value="LARGE RIBOSOMAL SUBUNIT PROTEIN BL31C"/>
    <property type="match status" value="1"/>
</dbReference>
<dbReference type="Pfam" id="PF01197">
    <property type="entry name" value="Ribosomal_L31"/>
    <property type="match status" value="1"/>
</dbReference>
<dbReference type="PRINTS" id="PR01249">
    <property type="entry name" value="RIBOSOMALL31"/>
</dbReference>
<dbReference type="SUPFAM" id="SSF143800">
    <property type="entry name" value="L28p-like"/>
    <property type="match status" value="1"/>
</dbReference>
<dbReference type="PROSITE" id="PS01143">
    <property type="entry name" value="RIBOSOMAL_L31"/>
    <property type="match status" value="1"/>
</dbReference>
<organism>
    <name type="scientific">Latilactobacillus sakei subsp. sakei (strain 23K)</name>
    <name type="common">Lactobacillus sakei subsp. sakei</name>
    <dbReference type="NCBI Taxonomy" id="314315"/>
    <lineage>
        <taxon>Bacteria</taxon>
        <taxon>Bacillati</taxon>
        <taxon>Bacillota</taxon>
        <taxon>Bacilli</taxon>
        <taxon>Lactobacillales</taxon>
        <taxon>Lactobacillaceae</taxon>
        <taxon>Latilactobacillus</taxon>
    </lineage>
</organism>
<reference key="1">
    <citation type="journal article" date="2005" name="Nat. Biotechnol.">
        <title>The complete genome sequence of the meat-borne lactic acid bacterium Lactobacillus sakei 23K.</title>
        <authorList>
            <person name="Chaillou S."/>
            <person name="Champomier-Verges M.-C."/>
            <person name="Cornet M."/>
            <person name="Crutz-Le Coq A.-M."/>
            <person name="Dudez A.-M."/>
            <person name="Martin V."/>
            <person name="Beaufils S."/>
            <person name="Darbon-Rongere E."/>
            <person name="Bossy R."/>
            <person name="Loux V."/>
            <person name="Zagorec M."/>
        </authorList>
    </citation>
    <scope>NUCLEOTIDE SEQUENCE [LARGE SCALE GENOMIC DNA]</scope>
    <source>
        <strain>23K</strain>
    </source>
</reference>
<name>RL31B_LATSS</name>
<proteinExistence type="inferred from homology"/>
<evidence type="ECO:0000255" key="1">
    <source>
        <dbReference type="HAMAP-Rule" id="MF_00502"/>
    </source>
</evidence>
<evidence type="ECO:0000305" key="2"/>
<comment type="subunit">
    <text evidence="1">Part of the 50S ribosomal subunit.</text>
</comment>
<comment type="similarity">
    <text evidence="1">Belongs to the bacterial ribosomal protein bL31 family. Type B subfamily.</text>
</comment>
<gene>
    <name evidence="1" type="primary">rpmE2</name>
    <name type="ordered locus">LCA_1627</name>
</gene>
<feature type="chain" id="PRO_1000126821" description="Large ribosomal subunit protein bL31B">
    <location>
        <begin position="1"/>
        <end position="87"/>
    </location>
</feature>
<sequence length="87" mass="9828">MKQGIHPDYHKVVFMDSSTGFKFISGSTANSAETVEWEDGNTYPLIRVEISSDSHPFYTGKQKFTQADGRVDRFNKKYGFADKNAAK</sequence>
<protein>
    <recommendedName>
        <fullName evidence="1">Large ribosomal subunit protein bL31B</fullName>
    </recommendedName>
    <alternativeName>
        <fullName evidence="2">50S ribosomal protein L31 type B</fullName>
    </alternativeName>
</protein>